<organism>
    <name type="scientific">Fusobacterium nucleatum subsp. nucleatum (strain ATCC 25586 / DSM 15643 / BCRC 10681 / CIP 101130 / JCM 8532 / KCTC 2640 / LMG 13131 / VPI 4355)</name>
    <dbReference type="NCBI Taxonomy" id="190304"/>
    <lineage>
        <taxon>Bacteria</taxon>
        <taxon>Fusobacteriati</taxon>
        <taxon>Fusobacteriota</taxon>
        <taxon>Fusobacteriia</taxon>
        <taxon>Fusobacteriales</taxon>
        <taxon>Fusobacteriaceae</taxon>
        <taxon>Fusobacterium</taxon>
    </lineage>
</organism>
<accession>Q8RI52</accession>
<feature type="chain" id="PRO_0000128909" description="4-hydroxy-3-methylbut-2-enyl diphosphate reductase">
    <location>
        <begin position="1"/>
        <end position="827"/>
    </location>
</feature>
<feature type="domain" description="S1 motif 1">
    <location>
        <begin position="477"/>
        <end position="545"/>
    </location>
</feature>
<feature type="domain" description="S1 motif 2">
    <location>
        <begin position="562"/>
        <end position="632"/>
    </location>
</feature>
<feature type="domain" description="S1 motif 3">
    <location>
        <begin position="649"/>
        <end position="716"/>
    </location>
</feature>
<feature type="domain" description="S1 motif 4">
    <location>
        <begin position="733"/>
        <end position="802"/>
    </location>
</feature>
<feature type="region of interest" description="4-hydroxy-3-methylbut-2-enyl diphosphate reductase">
    <location>
        <begin position="1"/>
        <end position="284"/>
    </location>
</feature>
<feature type="active site" description="Proton donor" evidence="1">
    <location>
        <position position="131"/>
    </location>
</feature>
<feature type="binding site" evidence="1">
    <location>
        <position position="12"/>
    </location>
    <ligand>
        <name>[4Fe-4S] cluster</name>
        <dbReference type="ChEBI" id="CHEBI:49883"/>
    </ligand>
</feature>
<feature type="binding site" evidence="1">
    <location>
        <position position="40"/>
    </location>
    <ligand>
        <name>(2E)-4-hydroxy-3-methylbut-2-enyl diphosphate</name>
        <dbReference type="ChEBI" id="CHEBI:128753"/>
    </ligand>
</feature>
<feature type="binding site" evidence="1">
    <location>
        <position position="40"/>
    </location>
    <ligand>
        <name>dimethylallyl diphosphate</name>
        <dbReference type="ChEBI" id="CHEBI:57623"/>
    </ligand>
</feature>
<feature type="binding site" evidence="1">
    <location>
        <position position="40"/>
    </location>
    <ligand>
        <name>isopentenyl diphosphate</name>
        <dbReference type="ChEBI" id="CHEBI:128769"/>
    </ligand>
</feature>
<feature type="binding site" evidence="1">
    <location>
        <position position="79"/>
    </location>
    <ligand>
        <name>(2E)-4-hydroxy-3-methylbut-2-enyl diphosphate</name>
        <dbReference type="ChEBI" id="CHEBI:128753"/>
    </ligand>
</feature>
<feature type="binding site" evidence="1">
    <location>
        <position position="79"/>
    </location>
    <ligand>
        <name>dimethylallyl diphosphate</name>
        <dbReference type="ChEBI" id="CHEBI:57623"/>
    </ligand>
</feature>
<feature type="binding site" evidence="1">
    <location>
        <position position="79"/>
    </location>
    <ligand>
        <name>isopentenyl diphosphate</name>
        <dbReference type="ChEBI" id="CHEBI:128769"/>
    </ligand>
</feature>
<feature type="binding site" evidence="1">
    <location>
        <position position="101"/>
    </location>
    <ligand>
        <name>[4Fe-4S] cluster</name>
        <dbReference type="ChEBI" id="CHEBI:49883"/>
    </ligand>
</feature>
<feature type="binding site" evidence="1">
    <location>
        <position position="129"/>
    </location>
    <ligand>
        <name>(2E)-4-hydroxy-3-methylbut-2-enyl diphosphate</name>
        <dbReference type="ChEBI" id="CHEBI:128753"/>
    </ligand>
</feature>
<feature type="binding site" evidence="1">
    <location>
        <position position="129"/>
    </location>
    <ligand>
        <name>dimethylallyl diphosphate</name>
        <dbReference type="ChEBI" id="CHEBI:57623"/>
    </ligand>
</feature>
<feature type="binding site" evidence="1">
    <location>
        <position position="129"/>
    </location>
    <ligand>
        <name>isopentenyl diphosphate</name>
        <dbReference type="ChEBI" id="CHEBI:128769"/>
    </ligand>
</feature>
<feature type="binding site" evidence="1">
    <location>
        <position position="168"/>
    </location>
    <ligand>
        <name>(2E)-4-hydroxy-3-methylbut-2-enyl diphosphate</name>
        <dbReference type="ChEBI" id="CHEBI:128753"/>
    </ligand>
</feature>
<feature type="binding site" evidence="1">
    <location>
        <position position="196"/>
    </location>
    <ligand>
        <name>[4Fe-4S] cluster</name>
        <dbReference type="ChEBI" id="CHEBI:49883"/>
    </ligand>
</feature>
<feature type="binding site" evidence="1">
    <location>
        <position position="224"/>
    </location>
    <ligand>
        <name>(2E)-4-hydroxy-3-methylbut-2-enyl diphosphate</name>
        <dbReference type="ChEBI" id="CHEBI:128753"/>
    </ligand>
</feature>
<feature type="binding site" evidence="1">
    <location>
        <position position="224"/>
    </location>
    <ligand>
        <name>dimethylallyl diphosphate</name>
        <dbReference type="ChEBI" id="CHEBI:57623"/>
    </ligand>
</feature>
<feature type="binding site" evidence="1">
    <location>
        <position position="224"/>
    </location>
    <ligand>
        <name>isopentenyl diphosphate</name>
        <dbReference type="ChEBI" id="CHEBI:128769"/>
    </ligand>
</feature>
<feature type="binding site" evidence="1">
    <location>
        <position position="225"/>
    </location>
    <ligand>
        <name>(2E)-4-hydroxy-3-methylbut-2-enyl diphosphate</name>
        <dbReference type="ChEBI" id="CHEBI:128753"/>
    </ligand>
</feature>
<feature type="binding site" evidence="1">
    <location>
        <position position="225"/>
    </location>
    <ligand>
        <name>dimethylallyl diphosphate</name>
        <dbReference type="ChEBI" id="CHEBI:57623"/>
    </ligand>
</feature>
<feature type="binding site" evidence="1">
    <location>
        <position position="225"/>
    </location>
    <ligand>
        <name>isopentenyl diphosphate</name>
        <dbReference type="ChEBI" id="CHEBI:128769"/>
    </ligand>
</feature>
<feature type="binding site" evidence="1">
    <location>
        <position position="226"/>
    </location>
    <ligand>
        <name>(2E)-4-hydroxy-3-methylbut-2-enyl diphosphate</name>
        <dbReference type="ChEBI" id="CHEBI:128753"/>
    </ligand>
</feature>
<feature type="binding site" evidence="1">
    <location>
        <position position="226"/>
    </location>
    <ligand>
        <name>dimethylallyl diphosphate</name>
        <dbReference type="ChEBI" id="CHEBI:57623"/>
    </ligand>
</feature>
<feature type="binding site" evidence="1">
    <location>
        <position position="226"/>
    </location>
    <ligand>
        <name>isopentenyl diphosphate</name>
        <dbReference type="ChEBI" id="CHEBI:128769"/>
    </ligand>
</feature>
<feature type="binding site" evidence="1">
    <location>
        <position position="268"/>
    </location>
    <ligand>
        <name>(2E)-4-hydroxy-3-methylbut-2-enyl diphosphate</name>
        <dbReference type="ChEBI" id="CHEBI:128753"/>
    </ligand>
</feature>
<feature type="binding site" evidence="1">
    <location>
        <position position="268"/>
    </location>
    <ligand>
        <name>dimethylallyl diphosphate</name>
        <dbReference type="ChEBI" id="CHEBI:57623"/>
    </ligand>
</feature>
<feature type="binding site" evidence="1">
    <location>
        <position position="268"/>
    </location>
    <ligand>
        <name>isopentenyl diphosphate</name>
        <dbReference type="ChEBI" id="CHEBI:128769"/>
    </ligand>
</feature>
<name>ISPH_FUSNN</name>
<sequence length="827" mass="94508">MEIIRAKHMGFCFGVLEAINVCNSLVEEKGRKYILGMLVHNKQVVEDMERKGFKLVTEDELLNDMDELKEDDIVVIRAHGTSKSVHEKLKERKVKVFDATCIFVNKIRQEIEIANENGYSILFMGDKNHPEVKGVISFADDIQIFESFEEAKKLKIDLDKTYLLSTQTTLNKKKFEEIKKYFKENYKNVVIFDKICGATAVRQKAVEDLAVKVEVMIIVGDTKSSNTKKLYEISKKLNDNSYLVENEEQLDLSIFRGKEVVGITAGASTPEETIMNIEKKVRGIYKMSNVNENQNEFSLMLEEFLPNQEKRVEGVIESMDQNFSYLDVPGERTAVRVRTDELKDYKVGDTVEVLITGLSEEDDDQEYITASRRKIEVEKNWEKIEDSFKNKTILDAKVTKKIKGGYLVEAFLYPGFLPNSLSEISDSEEKVNGKKIQVIVKDIKMDPKDKKNRKITYSVKDIRLAEQEKEFAGLAVGQIVDCVVTEVLDFGLAVDINTLKGFIHISEVSWKRLDKLSDNYKVGDKIKAVVVSLDEAKRNVKLSIKKLEEDPWATVANEFKVDDEIEGIVTKVLPYGAFVEIKPGVEGLVHISDFSWTKKKVNVADYVKEREKIKVRITDLHPEDRKLKLGIKQLVANPWETAEKDFAIDTVIKGKVVEVKPFGIFVEIADGIDAFVHSSDYNWVGEEIPKFEIGNEVELKITELDLNNKKIKGSLKALRKSPWEHAMEEYKVGTTVEKKIKTVADFGLFIELIKGIDGFIPTQFASKEFIKNIRDKFSEGDVVKAQVVEVNKETQKIKLSIKKIEIEEEKREEREQIEKYSTSSSEE</sequence>
<gene>
    <name evidence="1" type="primary">ispH</name>
    <name type="ordered locus">FN1781</name>
</gene>
<evidence type="ECO:0000255" key="1">
    <source>
        <dbReference type="HAMAP-Rule" id="MF_00191"/>
    </source>
</evidence>
<evidence type="ECO:0000305" key="2"/>
<dbReference type="EC" id="1.17.7.4" evidence="1"/>
<dbReference type="EMBL" id="AE009951">
    <property type="protein sequence ID" value="AAL93880.1"/>
    <property type="molecule type" value="Genomic_DNA"/>
</dbReference>
<dbReference type="RefSeq" id="NP_602581.1">
    <property type="nucleotide sequence ID" value="NC_003454.1"/>
</dbReference>
<dbReference type="RefSeq" id="WP_011015822.1">
    <property type="nucleotide sequence ID" value="NZ_CP028101.1"/>
</dbReference>
<dbReference type="SMR" id="Q8RI52"/>
<dbReference type="STRING" id="190304.FN1781"/>
<dbReference type="PaxDb" id="190304-FN1781"/>
<dbReference type="EnsemblBacteria" id="AAL93880">
    <property type="protein sequence ID" value="AAL93880"/>
    <property type="gene ID" value="FN1781"/>
</dbReference>
<dbReference type="GeneID" id="79782709"/>
<dbReference type="KEGG" id="fnu:FN1781"/>
<dbReference type="PATRIC" id="fig|190304.8.peg.255"/>
<dbReference type="eggNOG" id="COG0539">
    <property type="taxonomic scope" value="Bacteria"/>
</dbReference>
<dbReference type="eggNOG" id="COG0761">
    <property type="taxonomic scope" value="Bacteria"/>
</dbReference>
<dbReference type="eggNOG" id="COG1185">
    <property type="taxonomic scope" value="Bacteria"/>
</dbReference>
<dbReference type="HOGENOM" id="CLU_015805_3_1_0"/>
<dbReference type="InParanoid" id="Q8RI52"/>
<dbReference type="BioCyc" id="FNUC190304:G1FZS-279-MONOMER"/>
<dbReference type="UniPathway" id="UPA00056">
    <property type="reaction ID" value="UER00097"/>
</dbReference>
<dbReference type="UniPathway" id="UPA00059">
    <property type="reaction ID" value="UER00105"/>
</dbReference>
<dbReference type="Proteomes" id="UP000002521">
    <property type="component" value="Chromosome"/>
</dbReference>
<dbReference type="GO" id="GO:0005829">
    <property type="term" value="C:cytosol"/>
    <property type="evidence" value="ECO:0000318"/>
    <property type="project" value="GO_Central"/>
</dbReference>
<dbReference type="GO" id="GO:0051539">
    <property type="term" value="F:4 iron, 4 sulfur cluster binding"/>
    <property type="evidence" value="ECO:0007669"/>
    <property type="project" value="UniProtKB-UniRule"/>
</dbReference>
<dbReference type="GO" id="GO:0051745">
    <property type="term" value="F:4-hydroxy-3-methylbut-2-enyl diphosphate reductase activity"/>
    <property type="evidence" value="ECO:0000318"/>
    <property type="project" value="GO_Central"/>
</dbReference>
<dbReference type="GO" id="GO:0046872">
    <property type="term" value="F:metal ion binding"/>
    <property type="evidence" value="ECO:0007669"/>
    <property type="project" value="UniProtKB-KW"/>
</dbReference>
<dbReference type="GO" id="GO:0003676">
    <property type="term" value="F:nucleic acid binding"/>
    <property type="evidence" value="ECO:0007669"/>
    <property type="project" value="InterPro"/>
</dbReference>
<dbReference type="GO" id="GO:0050992">
    <property type="term" value="P:dimethylallyl diphosphate biosynthetic process"/>
    <property type="evidence" value="ECO:0007669"/>
    <property type="project" value="UniProtKB-UniRule"/>
</dbReference>
<dbReference type="GO" id="GO:0019288">
    <property type="term" value="P:isopentenyl diphosphate biosynthetic process, methylerythritol 4-phosphate pathway"/>
    <property type="evidence" value="ECO:0000318"/>
    <property type="project" value="GO_Central"/>
</dbReference>
<dbReference type="GO" id="GO:0016114">
    <property type="term" value="P:terpenoid biosynthetic process"/>
    <property type="evidence" value="ECO:0007669"/>
    <property type="project" value="UniProtKB-UniRule"/>
</dbReference>
<dbReference type="CDD" id="cd13944">
    <property type="entry name" value="lytB_ispH"/>
    <property type="match status" value="1"/>
</dbReference>
<dbReference type="CDD" id="cd00164">
    <property type="entry name" value="S1_like"/>
    <property type="match status" value="1"/>
</dbReference>
<dbReference type="FunFam" id="2.40.50.140:FF:000103">
    <property type="entry name" value="protein RRP5 homolog"/>
    <property type="match status" value="2"/>
</dbReference>
<dbReference type="Gene3D" id="3.40.50.11270">
    <property type="match status" value="1"/>
</dbReference>
<dbReference type="Gene3D" id="3.40.1010.20">
    <property type="entry name" value="4-hydroxy-3-methylbut-2-enyl diphosphate reductase, catalytic domain"/>
    <property type="match status" value="2"/>
</dbReference>
<dbReference type="Gene3D" id="2.40.50.140">
    <property type="entry name" value="Nucleic acid-binding proteins"/>
    <property type="match status" value="5"/>
</dbReference>
<dbReference type="HAMAP" id="MF_00191">
    <property type="entry name" value="IspH"/>
    <property type="match status" value="1"/>
</dbReference>
<dbReference type="InterPro" id="IPR003451">
    <property type="entry name" value="LytB/IspH"/>
</dbReference>
<dbReference type="InterPro" id="IPR012340">
    <property type="entry name" value="NA-bd_OB-fold"/>
</dbReference>
<dbReference type="InterPro" id="IPR035104">
    <property type="entry name" value="Ribosomal_protein_S1-like"/>
</dbReference>
<dbReference type="InterPro" id="IPR003029">
    <property type="entry name" value="S1_domain"/>
</dbReference>
<dbReference type="NCBIfam" id="TIGR00216">
    <property type="entry name" value="ispH_lytB"/>
    <property type="match status" value="1"/>
</dbReference>
<dbReference type="NCBIfam" id="NF000907">
    <property type="entry name" value="PRK00087.1"/>
    <property type="match status" value="1"/>
</dbReference>
<dbReference type="PANTHER" id="PTHR30426">
    <property type="entry name" value="4-HYDROXY-3-METHYLBUT-2-ENYL DIPHOSPHATE REDUCTASE"/>
    <property type="match status" value="1"/>
</dbReference>
<dbReference type="PANTHER" id="PTHR30426:SF0">
    <property type="entry name" value="4-HYDROXY-3-METHYLBUT-2-ENYL DIPHOSPHATE REDUCTASE"/>
    <property type="match status" value="1"/>
</dbReference>
<dbReference type="Pfam" id="PF02401">
    <property type="entry name" value="LYTB"/>
    <property type="match status" value="1"/>
</dbReference>
<dbReference type="Pfam" id="PF00575">
    <property type="entry name" value="S1"/>
    <property type="match status" value="4"/>
</dbReference>
<dbReference type="PRINTS" id="PR00681">
    <property type="entry name" value="RIBOSOMALS1"/>
</dbReference>
<dbReference type="SMART" id="SM00316">
    <property type="entry name" value="S1"/>
    <property type="match status" value="6"/>
</dbReference>
<dbReference type="SUPFAM" id="SSF50249">
    <property type="entry name" value="Nucleic acid-binding proteins"/>
    <property type="match status" value="6"/>
</dbReference>
<dbReference type="PROSITE" id="PS50126">
    <property type="entry name" value="S1"/>
    <property type="match status" value="4"/>
</dbReference>
<keyword id="KW-0004">4Fe-4S</keyword>
<keyword id="KW-0408">Iron</keyword>
<keyword id="KW-0411">Iron-sulfur</keyword>
<keyword id="KW-0414">Isoprene biosynthesis</keyword>
<keyword id="KW-0479">Metal-binding</keyword>
<keyword id="KW-0560">Oxidoreductase</keyword>
<keyword id="KW-1185">Reference proteome</keyword>
<protein>
    <recommendedName>
        <fullName evidence="1">4-hydroxy-3-methylbut-2-enyl diphosphate reductase</fullName>
        <shortName evidence="1">HMBPP reductase</shortName>
        <ecNumber evidence="1">1.17.7.4</ecNumber>
    </recommendedName>
</protein>
<proteinExistence type="inferred from homology"/>
<reference key="1">
    <citation type="journal article" date="2002" name="J. Bacteriol.">
        <title>Genome sequence and analysis of the oral bacterium Fusobacterium nucleatum strain ATCC 25586.</title>
        <authorList>
            <person name="Kapatral V."/>
            <person name="Anderson I."/>
            <person name="Ivanova N."/>
            <person name="Reznik G."/>
            <person name="Los T."/>
            <person name="Lykidis A."/>
            <person name="Bhattacharyya A."/>
            <person name="Bartman A."/>
            <person name="Gardner W."/>
            <person name="Grechkin G."/>
            <person name="Zhu L."/>
            <person name="Vasieva O."/>
            <person name="Chu L."/>
            <person name="Kogan Y."/>
            <person name="Chaga O."/>
            <person name="Goltsman E."/>
            <person name="Bernal A."/>
            <person name="Larsen N."/>
            <person name="D'Souza M."/>
            <person name="Walunas T."/>
            <person name="Pusch G."/>
            <person name="Haselkorn R."/>
            <person name="Fonstein M."/>
            <person name="Kyrpides N.C."/>
            <person name="Overbeek R."/>
        </authorList>
    </citation>
    <scope>NUCLEOTIDE SEQUENCE [LARGE SCALE GENOMIC DNA]</scope>
    <source>
        <strain>ATCC 25586 / DSM 15643 / BCRC 10681 / CIP 101130 / JCM 8532 / KCTC 2640 / LMG 13131 / VPI 4355</strain>
    </source>
</reference>
<comment type="function">
    <text evidence="1">Catalyzes the conversion of 1-hydroxy-2-methyl-2-(E)-butenyl 4-diphosphate (HMBPP) into a mixture of isopentenyl diphosphate (IPP) and dimethylallyl diphosphate (DMAPP). Acts in the terminal step of the DOXP/MEP pathway for isoprenoid precursor biosynthesis.</text>
</comment>
<comment type="catalytic activity">
    <reaction evidence="1">
        <text>isopentenyl diphosphate + 2 oxidized [2Fe-2S]-[ferredoxin] + H2O = (2E)-4-hydroxy-3-methylbut-2-enyl diphosphate + 2 reduced [2Fe-2S]-[ferredoxin] + 2 H(+)</text>
        <dbReference type="Rhea" id="RHEA:24488"/>
        <dbReference type="Rhea" id="RHEA-COMP:10000"/>
        <dbReference type="Rhea" id="RHEA-COMP:10001"/>
        <dbReference type="ChEBI" id="CHEBI:15377"/>
        <dbReference type="ChEBI" id="CHEBI:15378"/>
        <dbReference type="ChEBI" id="CHEBI:33737"/>
        <dbReference type="ChEBI" id="CHEBI:33738"/>
        <dbReference type="ChEBI" id="CHEBI:128753"/>
        <dbReference type="ChEBI" id="CHEBI:128769"/>
        <dbReference type="EC" id="1.17.7.4"/>
    </reaction>
</comment>
<comment type="catalytic activity">
    <reaction evidence="1">
        <text>dimethylallyl diphosphate + 2 oxidized [2Fe-2S]-[ferredoxin] + H2O = (2E)-4-hydroxy-3-methylbut-2-enyl diphosphate + 2 reduced [2Fe-2S]-[ferredoxin] + 2 H(+)</text>
        <dbReference type="Rhea" id="RHEA:24825"/>
        <dbReference type="Rhea" id="RHEA-COMP:10000"/>
        <dbReference type="Rhea" id="RHEA-COMP:10001"/>
        <dbReference type="ChEBI" id="CHEBI:15377"/>
        <dbReference type="ChEBI" id="CHEBI:15378"/>
        <dbReference type="ChEBI" id="CHEBI:33737"/>
        <dbReference type="ChEBI" id="CHEBI:33738"/>
        <dbReference type="ChEBI" id="CHEBI:57623"/>
        <dbReference type="ChEBI" id="CHEBI:128753"/>
        <dbReference type="EC" id="1.17.7.4"/>
    </reaction>
</comment>
<comment type="cofactor">
    <cofactor evidence="1">
        <name>[4Fe-4S] cluster</name>
        <dbReference type="ChEBI" id="CHEBI:49883"/>
    </cofactor>
    <text evidence="1">Binds 1 [4Fe-4S] cluster per subunit.</text>
</comment>
<comment type="pathway">
    <text evidence="1">Isoprenoid biosynthesis; dimethylallyl diphosphate biosynthesis; dimethylallyl diphosphate from (2E)-4-hydroxy-3-methylbutenyl diphosphate: step 1/1.</text>
</comment>
<comment type="pathway">
    <text evidence="1">Isoprenoid biosynthesis; isopentenyl diphosphate biosynthesis via DXP pathway; isopentenyl diphosphate from 1-deoxy-D-xylulose 5-phosphate: step 6/6.</text>
</comment>
<comment type="similarity">
    <text evidence="2">In the N-terminal section; belongs to the IspH family.</text>
</comment>